<comment type="function">
    <text evidence="1">Catalyzes the reversible conversion of 3-phosphohydroxypyruvate to phosphoserine and of 3-hydroxy-2-oxo-4-phosphonooxybutanoate to phosphohydroxythreonine.</text>
</comment>
<comment type="catalytic activity">
    <reaction evidence="1">
        <text>O-phospho-L-serine + 2-oxoglutarate = 3-phosphooxypyruvate + L-glutamate</text>
        <dbReference type="Rhea" id="RHEA:14329"/>
        <dbReference type="ChEBI" id="CHEBI:16810"/>
        <dbReference type="ChEBI" id="CHEBI:18110"/>
        <dbReference type="ChEBI" id="CHEBI:29985"/>
        <dbReference type="ChEBI" id="CHEBI:57524"/>
        <dbReference type="EC" id="2.6.1.52"/>
    </reaction>
</comment>
<comment type="catalytic activity">
    <reaction evidence="1">
        <text>4-(phosphooxy)-L-threonine + 2-oxoglutarate = (R)-3-hydroxy-2-oxo-4-phosphooxybutanoate + L-glutamate</text>
        <dbReference type="Rhea" id="RHEA:16573"/>
        <dbReference type="ChEBI" id="CHEBI:16810"/>
        <dbReference type="ChEBI" id="CHEBI:29985"/>
        <dbReference type="ChEBI" id="CHEBI:58452"/>
        <dbReference type="ChEBI" id="CHEBI:58538"/>
        <dbReference type="EC" id="2.6.1.52"/>
    </reaction>
</comment>
<comment type="cofactor">
    <cofactor evidence="1">
        <name>pyridoxal 5'-phosphate</name>
        <dbReference type="ChEBI" id="CHEBI:597326"/>
    </cofactor>
    <text evidence="1">Binds 1 pyridoxal phosphate per subunit.</text>
</comment>
<comment type="pathway">
    <text evidence="1">Amino-acid biosynthesis; L-serine biosynthesis; L-serine from 3-phospho-D-glycerate: step 2/3.</text>
</comment>
<comment type="pathway">
    <text evidence="1">Cofactor biosynthesis; pyridoxine 5'-phosphate biosynthesis; pyridoxine 5'-phosphate from D-erythrose 4-phosphate: step 3/5.</text>
</comment>
<comment type="subunit">
    <text evidence="1">Homodimer.</text>
</comment>
<comment type="subcellular location">
    <subcellularLocation>
        <location evidence="1">Cytoplasm</location>
    </subcellularLocation>
</comment>
<comment type="similarity">
    <text evidence="1">Belongs to the class-V pyridoxal-phosphate-dependent aminotransferase family. SerC subfamily.</text>
</comment>
<evidence type="ECO:0000255" key="1">
    <source>
        <dbReference type="HAMAP-Rule" id="MF_00160"/>
    </source>
</evidence>
<protein>
    <recommendedName>
        <fullName evidence="1">Phosphoserine aminotransferase</fullName>
        <ecNumber evidence="1">2.6.1.52</ecNumber>
    </recommendedName>
    <alternativeName>
        <fullName evidence="1">Phosphohydroxythreonine aminotransferase</fullName>
        <shortName evidence="1">PSAT</shortName>
    </alternativeName>
</protein>
<accession>Q7VR40</accession>
<dbReference type="EC" id="2.6.1.52" evidence="1"/>
<dbReference type="EMBL" id="BX248583">
    <property type="protein sequence ID" value="CAD83449.1"/>
    <property type="molecule type" value="Genomic_DNA"/>
</dbReference>
<dbReference type="SMR" id="Q7VR40"/>
<dbReference type="STRING" id="203907.Bfl383"/>
<dbReference type="KEGG" id="bfl:Bfl383"/>
<dbReference type="eggNOG" id="COG1932">
    <property type="taxonomic scope" value="Bacteria"/>
</dbReference>
<dbReference type="HOGENOM" id="CLU_034866_0_2_6"/>
<dbReference type="OrthoDB" id="9809412at2"/>
<dbReference type="UniPathway" id="UPA00135">
    <property type="reaction ID" value="UER00197"/>
</dbReference>
<dbReference type="UniPathway" id="UPA00244">
    <property type="reaction ID" value="UER00311"/>
</dbReference>
<dbReference type="Proteomes" id="UP000002192">
    <property type="component" value="Chromosome"/>
</dbReference>
<dbReference type="GO" id="GO:0005737">
    <property type="term" value="C:cytoplasm"/>
    <property type="evidence" value="ECO:0007669"/>
    <property type="project" value="UniProtKB-SubCell"/>
</dbReference>
<dbReference type="GO" id="GO:0004648">
    <property type="term" value="F:O-phospho-L-serine:2-oxoglutarate aminotransferase activity"/>
    <property type="evidence" value="ECO:0007669"/>
    <property type="project" value="UniProtKB-UniRule"/>
</dbReference>
<dbReference type="GO" id="GO:0030170">
    <property type="term" value="F:pyridoxal phosphate binding"/>
    <property type="evidence" value="ECO:0007669"/>
    <property type="project" value="UniProtKB-UniRule"/>
</dbReference>
<dbReference type="GO" id="GO:0006564">
    <property type="term" value="P:L-serine biosynthetic process"/>
    <property type="evidence" value="ECO:0007669"/>
    <property type="project" value="UniProtKB-UniRule"/>
</dbReference>
<dbReference type="GO" id="GO:0008615">
    <property type="term" value="P:pyridoxine biosynthetic process"/>
    <property type="evidence" value="ECO:0007669"/>
    <property type="project" value="UniProtKB-UniRule"/>
</dbReference>
<dbReference type="FunFam" id="3.40.640.10:FF:000010">
    <property type="entry name" value="Phosphoserine aminotransferase"/>
    <property type="match status" value="1"/>
</dbReference>
<dbReference type="FunFam" id="3.90.1150.10:FF:000006">
    <property type="entry name" value="Phosphoserine aminotransferase"/>
    <property type="match status" value="1"/>
</dbReference>
<dbReference type="Gene3D" id="3.90.1150.10">
    <property type="entry name" value="Aspartate Aminotransferase, domain 1"/>
    <property type="match status" value="1"/>
</dbReference>
<dbReference type="Gene3D" id="3.40.640.10">
    <property type="entry name" value="Type I PLP-dependent aspartate aminotransferase-like (Major domain)"/>
    <property type="match status" value="1"/>
</dbReference>
<dbReference type="HAMAP" id="MF_00160">
    <property type="entry name" value="SerC_aminotrans_5"/>
    <property type="match status" value="1"/>
</dbReference>
<dbReference type="InterPro" id="IPR000192">
    <property type="entry name" value="Aminotrans_V_dom"/>
</dbReference>
<dbReference type="InterPro" id="IPR020578">
    <property type="entry name" value="Aminotrans_V_PyrdxlP_BS"/>
</dbReference>
<dbReference type="InterPro" id="IPR022278">
    <property type="entry name" value="Pser_aminoTfrase"/>
</dbReference>
<dbReference type="InterPro" id="IPR015424">
    <property type="entry name" value="PyrdxlP-dep_Trfase"/>
</dbReference>
<dbReference type="InterPro" id="IPR015421">
    <property type="entry name" value="PyrdxlP-dep_Trfase_major"/>
</dbReference>
<dbReference type="InterPro" id="IPR015422">
    <property type="entry name" value="PyrdxlP-dep_Trfase_small"/>
</dbReference>
<dbReference type="NCBIfam" id="NF003764">
    <property type="entry name" value="PRK05355.1"/>
    <property type="match status" value="1"/>
</dbReference>
<dbReference type="NCBIfam" id="TIGR01364">
    <property type="entry name" value="serC_1"/>
    <property type="match status" value="1"/>
</dbReference>
<dbReference type="PANTHER" id="PTHR43247">
    <property type="entry name" value="PHOSPHOSERINE AMINOTRANSFERASE"/>
    <property type="match status" value="1"/>
</dbReference>
<dbReference type="PANTHER" id="PTHR43247:SF1">
    <property type="entry name" value="PHOSPHOSERINE AMINOTRANSFERASE"/>
    <property type="match status" value="1"/>
</dbReference>
<dbReference type="Pfam" id="PF00266">
    <property type="entry name" value="Aminotran_5"/>
    <property type="match status" value="1"/>
</dbReference>
<dbReference type="PIRSF" id="PIRSF000525">
    <property type="entry name" value="SerC"/>
    <property type="match status" value="1"/>
</dbReference>
<dbReference type="SUPFAM" id="SSF53383">
    <property type="entry name" value="PLP-dependent transferases"/>
    <property type="match status" value="1"/>
</dbReference>
<dbReference type="PROSITE" id="PS00595">
    <property type="entry name" value="AA_TRANSFER_CLASS_5"/>
    <property type="match status" value="1"/>
</dbReference>
<sequence>MKKIFNFSAGPSMLPKQVLNQIQQELYDWNNLGISIMEISHRSLEFMELVHDTKRNLRNLLNIPNSYEILFCHGGARAQFSAIPMNFLRGSADNIDYINTGYWGYLAAIESKKYCHPNIINISSSKNELRYIKPMSEWNISKNSTYIHYCPNETVEGISIDDIPDCFEKKIVIADFSSTLLSRPVNVNNFGMIYAAAQKNMGISGLTVLIIRRSLINNISTVQKIPAILNYRILADSNSMFNTPVTVSWYIANLVFKWLQDQGGLDKIAEYNKKKSNLLYHAIDSNDFYYNNIHSLNRSRMNIPFFLKKEKLNSLFLSESTSFGLHGLKGHKVIGGMRASLYNAMTLEGVQKLVNFMNFFSKKYG</sequence>
<reference key="1">
    <citation type="journal article" date="2003" name="Proc. Natl. Acad. Sci. U.S.A.">
        <title>The genome sequence of Blochmannia floridanus: comparative analysis of reduced genomes.</title>
        <authorList>
            <person name="Gil R."/>
            <person name="Silva F.J."/>
            <person name="Zientz E."/>
            <person name="Delmotte F."/>
            <person name="Gonzalez-Candelas F."/>
            <person name="Latorre A."/>
            <person name="Rausell C."/>
            <person name="Kamerbeek J."/>
            <person name="Gadau J."/>
            <person name="Hoelldobler B."/>
            <person name="van Ham R.C.H.J."/>
            <person name="Gross R."/>
            <person name="Moya A."/>
        </authorList>
    </citation>
    <scope>NUCLEOTIDE SEQUENCE [LARGE SCALE GENOMIC DNA]</scope>
</reference>
<proteinExistence type="inferred from homology"/>
<feature type="chain" id="PRO_0000150163" description="Phosphoserine aminotransferase">
    <location>
        <begin position="1"/>
        <end position="365"/>
    </location>
</feature>
<feature type="binding site" evidence="1">
    <location>
        <position position="42"/>
    </location>
    <ligand>
        <name>L-glutamate</name>
        <dbReference type="ChEBI" id="CHEBI:29985"/>
    </ligand>
</feature>
<feature type="binding site" evidence="1">
    <location>
        <begin position="76"/>
        <end position="77"/>
    </location>
    <ligand>
        <name>pyridoxal 5'-phosphate</name>
        <dbReference type="ChEBI" id="CHEBI:597326"/>
    </ligand>
</feature>
<feature type="binding site" evidence="1">
    <location>
        <position position="103"/>
    </location>
    <ligand>
        <name>pyridoxal 5'-phosphate</name>
        <dbReference type="ChEBI" id="CHEBI:597326"/>
    </ligand>
</feature>
<feature type="binding site" evidence="1">
    <location>
        <position position="154"/>
    </location>
    <ligand>
        <name>pyridoxal 5'-phosphate</name>
        <dbReference type="ChEBI" id="CHEBI:597326"/>
    </ligand>
</feature>
<feature type="binding site" evidence="1">
    <location>
        <position position="175"/>
    </location>
    <ligand>
        <name>pyridoxal 5'-phosphate</name>
        <dbReference type="ChEBI" id="CHEBI:597326"/>
    </ligand>
</feature>
<feature type="binding site" evidence="1">
    <location>
        <position position="198"/>
    </location>
    <ligand>
        <name>pyridoxal 5'-phosphate</name>
        <dbReference type="ChEBI" id="CHEBI:597326"/>
    </ligand>
</feature>
<feature type="binding site" evidence="1">
    <location>
        <begin position="242"/>
        <end position="243"/>
    </location>
    <ligand>
        <name>pyridoxal 5'-phosphate</name>
        <dbReference type="ChEBI" id="CHEBI:597326"/>
    </ligand>
</feature>
<feature type="modified residue" description="N6-(pyridoxal phosphate)lysine" evidence="1">
    <location>
        <position position="199"/>
    </location>
</feature>
<gene>
    <name evidence="1" type="primary">serC</name>
    <name type="ordered locus">Bfl383</name>
</gene>
<name>SERC_BLOFL</name>
<keyword id="KW-0028">Amino-acid biosynthesis</keyword>
<keyword id="KW-0032">Aminotransferase</keyword>
<keyword id="KW-0963">Cytoplasm</keyword>
<keyword id="KW-0663">Pyridoxal phosphate</keyword>
<keyword id="KW-0664">Pyridoxine biosynthesis</keyword>
<keyword id="KW-1185">Reference proteome</keyword>
<keyword id="KW-0718">Serine biosynthesis</keyword>
<keyword id="KW-0808">Transferase</keyword>
<organism>
    <name type="scientific">Blochmanniella floridana</name>
    <dbReference type="NCBI Taxonomy" id="203907"/>
    <lineage>
        <taxon>Bacteria</taxon>
        <taxon>Pseudomonadati</taxon>
        <taxon>Pseudomonadota</taxon>
        <taxon>Gammaproteobacteria</taxon>
        <taxon>Enterobacterales</taxon>
        <taxon>Enterobacteriaceae</taxon>
        <taxon>ant endosymbionts</taxon>
        <taxon>Candidatus Blochmanniella</taxon>
    </lineage>
</organism>